<name>METK_METRJ</name>
<sequence>MPRSNYLFTSESVSEGHPDKVCDRISDTVVDAYLAAMPEARLGVETLATTNRIVIAGEVRGPDSVTFKDLEALTREAVKDIGYEQSGFHWKNNDVAIHLHAQSADIAQGVDAAGNKDEGAGDQGIMFGYAADETPELMPAPIFYAHKILKDLADARKARQGDAAKLGPDAKSQVTVRYENGRPVEVTQIVLSTQHLDESLDSADVRAIVEPYILKALPQGWVNEGTVWHVNPTGKFVIGGPDGDAGLTGRKIIVDTYGGAAPHGGGAFSGKDPTKVDRSAAYAARYLAKNVVAAGLASRATIQLAYAIGVSKPLSIYVDLHGTGTVDEAKLEAVLMDAMDLSPRGIRTALSLNKPIYARTSAYGHFGRAPEADGGFSWERTDLAGKLKSALA</sequence>
<dbReference type="EC" id="2.5.1.6" evidence="1"/>
<dbReference type="EMBL" id="CP001001">
    <property type="protein sequence ID" value="ACB26459.1"/>
    <property type="molecule type" value="Genomic_DNA"/>
</dbReference>
<dbReference type="RefSeq" id="WP_012321412.1">
    <property type="nucleotide sequence ID" value="NC_010505.1"/>
</dbReference>
<dbReference type="SMR" id="B1M4Z8"/>
<dbReference type="STRING" id="426355.Mrad2831_4493"/>
<dbReference type="GeneID" id="6140559"/>
<dbReference type="KEGG" id="mrd:Mrad2831_4493"/>
<dbReference type="eggNOG" id="COG0192">
    <property type="taxonomic scope" value="Bacteria"/>
</dbReference>
<dbReference type="HOGENOM" id="CLU_041802_1_1_5"/>
<dbReference type="OrthoDB" id="9801686at2"/>
<dbReference type="UniPathway" id="UPA00315">
    <property type="reaction ID" value="UER00080"/>
</dbReference>
<dbReference type="Proteomes" id="UP000006589">
    <property type="component" value="Chromosome"/>
</dbReference>
<dbReference type="GO" id="GO:0005737">
    <property type="term" value="C:cytoplasm"/>
    <property type="evidence" value="ECO:0007669"/>
    <property type="project" value="UniProtKB-SubCell"/>
</dbReference>
<dbReference type="GO" id="GO:0005524">
    <property type="term" value="F:ATP binding"/>
    <property type="evidence" value="ECO:0007669"/>
    <property type="project" value="UniProtKB-UniRule"/>
</dbReference>
<dbReference type="GO" id="GO:0000287">
    <property type="term" value="F:magnesium ion binding"/>
    <property type="evidence" value="ECO:0007669"/>
    <property type="project" value="UniProtKB-UniRule"/>
</dbReference>
<dbReference type="GO" id="GO:0004478">
    <property type="term" value="F:methionine adenosyltransferase activity"/>
    <property type="evidence" value="ECO:0007669"/>
    <property type="project" value="UniProtKB-UniRule"/>
</dbReference>
<dbReference type="GO" id="GO:0006730">
    <property type="term" value="P:one-carbon metabolic process"/>
    <property type="evidence" value="ECO:0007669"/>
    <property type="project" value="UniProtKB-KW"/>
</dbReference>
<dbReference type="GO" id="GO:0006556">
    <property type="term" value="P:S-adenosylmethionine biosynthetic process"/>
    <property type="evidence" value="ECO:0007669"/>
    <property type="project" value="UniProtKB-UniRule"/>
</dbReference>
<dbReference type="CDD" id="cd18079">
    <property type="entry name" value="S-AdoMet_synt"/>
    <property type="match status" value="1"/>
</dbReference>
<dbReference type="FunFam" id="3.30.300.10:FF:000003">
    <property type="entry name" value="S-adenosylmethionine synthase"/>
    <property type="match status" value="1"/>
</dbReference>
<dbReference type="Gene3D" id="3.30.300.10">
    <property type="match status" value="3"/>
</dbReference>
<dbReference type="HAMAP" id="MF_00086">
    <property type="entry name" value="S_AdoMet_synth1"/>
    <property type="match status" value="1"/>
</dbReference>
<dbReference type="InterPro" id="IPR022631">
    <property type="entry name" value="ADOMET_SYNTHASE_CS"/>
</dbReference>
<dbReference type="InterPro" id="IPR022630">
    <property type="entry name" value="S-AdoMet_synt_C"/>
</dbReference>
<dbReference type="InterPro" id="IPR022629">
    <property type="entry name" value="S-AdoMet_synt_central"/>
</dbReference>
<dbReference type="InterPro" id="IPR022628">
    <property type="entry name" value="S-AdoMet_synt_N"/>
</dbReference>
<dbReference type="InterPro" id="IPR002133">
    <property type="entry name" value="S-AdoMet_synthetase"/>
</dbReference>
<dbReference type="InterPro" id="IPR022636">
    <property type="entry name" value="S-AdoMet_synthetase_sfam"/>
</dbReference>
<dbReference type="NCBIfam" id="TIGR01034">
    <property type="entry name" value="metK"/>
    <property type="match status" value="1"/>
</dbReference>
<dbReference type="PANTHER" id="PTHR11964">
    <property type="entry name" value="S-ADENOSYLMETHIONINE SYNTHETASE"/>
    <property type="match status" value="1"/>
</dbReference>
<dbReference type="Pfam" id="PF02773">
    <property type="entry name" value="S-AdoMet_synt_C"/>
    <property type="match status" value="1"/>
</dbReference>
<dbReference type="Pfam" id="PF02772">
    <property type="entry name" value="S-AdoMet_synt_M"/>
    <property type="match status" value="1"/>
</dbReference>
<dbReference type="Pfam" id="PF00438">
    <property type="entry name" value="S-AdoMet_synt_N"/>
    <property type="match status" value="1"/>
</dbReference>
<dbReference type="PIRSF" id="PIRSF000497">
    <property type="entry name" value="MAT"/>
    <property type="match status" value="1"/>
</dbReference>
<dbReference type="SUPFAM" id="SSF55973">
    <property type="entry name" value="S-adenosylmethionine synthetase"/>
    <property type="match status" value="3"/>
</dbReference>
<dbReference type="PROSITE" id="PS00376">
    <property type="entry name" value="ADOMET_SYNTHASE_1"/>
    <property type="match status" value="1"/>
</dbReference>
<dbReference type="PROSITE" id="PS00377">
    <property type="entry name" value="ADOMET_SYNTHASE_2"/>
    <property type="match status" value="1"/>
</dbReference>
<proteinExistence type="inferred from homology"/>
<evidence type="ECO:0000255" key="1">
    <source>
        <dbReference type="HAMAP-Rule" id="MF_00086"/>
    </source>
</evidence>
<reference key="1">
    <citation type="submission" date="2008-03" db="EMBL/GenBank/DDBJ databases">
        <title>Complete sequence of chromosome of Methylobacterium radiotolerans JCM 2831.</title>
        <authorList>
            <consortium name="US DOE Joint Genome Institute"/>
            <person name="Copeland A."/>
            <person name="Lucas S."/>
            <person name="Lapidus A."/>
            <person name="Glavina del Rio T."/>
            <person name="Dalin E."/>
            <person name="Tice H."/>
            <person name="Bruce D."/>
            <person name="Goodwin L."/>
            <person name="Pitluck S."/>
            <person name="Kiss H."/>
            <person name="Brettin T."/>
            <person name="Detter J.C."/>
            <person name="Han C."/>
            <person name="Kuske C.R."/>
            <person name="Schmutz J."/>
            <person name="Larimer F."/>
            <person name="Land M."/>
            <person name="Hauser L."/>
            <person name="Kyrpides N."/>
            <person name="Mikhailova N."/>
            <person name="Marx C.J."/>
            <person name="Richardson P."/>
        </authorList>
    </citation>
    <scope>NUCLEOTIDE SEQUENCE [LARGE SCALE GENOMIC DNA]</scope>
    <source>
        <strain>ATCC 27329 / DSM 1819 / JCM 2831 / NBRC 15690 / NCIMB 10815 / 0-1</strain>
    </source>
</reference>
<accession>B1M4Z8</accession>
<protein>
    <recommendedName>
        <fullName evidence="1">S-adenosylmethionine synthase</fullName>
        <shortName evidence="1">AdoMet synthase</shortName>
        <ecNumber evidence="1">2.5.1.6</ecNumber>
    </recommendedName>
    <alternativeName>
        <fullName evidence="1">MAT</fullName>
    </alternativeName>
    <alternativeName>
        <fullName evidence="1">Methionine adenosyltransferase</fullName>
    </alternativeName>
</protein>
<organism>
    <name type="scientific">Methylobacterium radiotolerans (strain ATCC 27329 / DSM 1819 / JCM 2831 / NBRC 15690 / NCIMB 10815 / 0-1)</name>
    <dbReference type="NCBI Taxonomy" id="426355"/>
    <lineage>
        <taxon>Bacteria</taxon>
        <taxon>Pseudomonadati</taxon>
        <taxon>Pseudomonadota</taxon>
        <taxon>Alphaproteobacteria</taxon>
        <taxon>Hyphomicrobiales</taxon>
        <taxon>Methylobacteriaceae</taxon>
        <taxon>Methylobacterium</taxon>
    </lineage>
</organism>
<gene>
    <name evidence="1" type="primary">metK</name>
    <name type="ordered locus">Mrad2831_4493</name>
</gene>
<feature type="chain" id="PRO_1000093063" description="S-adenosylmethionine synthase">
    <location>
        <begin position="1"/>
        <end position="392"/>
    </location>
</feature>
<feature type="region of interest" description="Flexible loop" evidence="1">
    <location>
        <begin position="102"/>
        <end position="112"/>
    </location>
</feature>
<feature type="binding site" description="in other chain" evidence="1">
    <location>
        <position position="17"/>
    </location>
    <ligand>
        <name>ATP</name>
        <dbReference type="ChEBI" id="CHEBI:30616"/>
        <note>ligand shared between two neighboring subunits</note>
    </ligand>
</feature>
<feature type="binding site" evidence="1">
    <location>
        <position position="19"/>
    </location>
    <ligand>
        <name>Mg(2+)</name>
        <dbReference type="ChEBI" id="CHEBI:18420"/>
    </ligand>
</feature>
<feature type="binding site" evidence="1">
    <location>
        <position position="45"/>
    </location>
    <ligand>
        <name>K(+)</name>
        <dbReference type="ChEBI" id="CHEBI:29103"/>
    </ligand>
</feature>
<feature type="binding site" description="in other chain" evidence="1">
    <location>
        <position position="58"/>
    </location>
    <ligand>
        <name>L-methionine</name>
        <dbReference type="ChEBI" id="CHEBI:57844"/>
        <note>ligand shared between two neighboring subunits</note>
    </ligand>
</feature>
<feature type="binding site" description="in other chain" evidence="1">
    <location>
        <position position="102"/>
    </location>
    <ligand>
        <name>L-methionine</name>
        <dbReference type="ChEBI" id="CHEBI:57844"/>
        <note>ligand shared between two neighboring subunits</note>
    </ligand>
</feature>
<feature type="binding site" description="in other chain" evidence="1">
    <location>
        <begin position="169"/>
        <end position="171"/>
    </location>
    <ligand>
        <name>ATP</name>
        <dbReference type="ChEBI" id="CHEBI:30616"/>
        <note>ligand shared between two neighboring subunits</note>
    </ligand>
</feature>
<feature type="binding site" description="in other chain" evidence="1">
    <location>
        <begin position="235"/>
        <end position="236"/>
    </location>
    <ligand>
        <name>ATP</name>
        <dbReference type="ChEBI" id="CHEBI:30616"/>
        <note>ligand shared between two neighboring subunits</note>
    </ligand>
</feature>
<feature type="binding site" evidence="1">
    <location>
        <position position="244"/>
    </location>
    <ligand>
        <name>ATP</name>
        <dbReference type="ChEBI" id="CHEBI:30616"/>
        <note>ligand shared between two neighboring subunits</note>
    </ligand>
</feature>
<feature type="binding site" evidence="1">
    <location>
        <position position="244"/>
    </location>
    <ligand>
        <name>L-methionine</name>
        <dbReference type="ChEBI" id="CHEBI:57844"/>
        <note>ligand shared between two neighboring subunits</note>
    </ligand>
</feature>
<feature type="binding site" description="in other chain" evidence="1">
    <location>
        <begin position="250"/>
        <end position="251"/>
    </location>
    <ligand>
        <name>ATP</name>
        <dbReference type="ChEBI" id="CHEBI:30616"/>
        <note>ligand shared between two neighboring subunits</note>
    </ligand>
</feature>
<feature type="binding site" evidence="1">
    <location>
        <position position="267"/>
    </location>
    <ligand>
        <name>ATP</name>
        <dbReference type="ChEBI" id="CHEBI:30616"/>
        <note>ligand shared between two neighboring subunits</note>
    </ligand>
</feature>
<feature type="binding site" evidence="1">
    <location>
        <position position="271"/>
    </location>
    <ligand>
        <name>ATP</name>
        <dbReference type="ChEBI" id="CHEBI:30616"/>
        <note>ligand shared between two neighboring subunits</note>
    </ligand>
</feature>
<feature type="binding site" description="in other chain" evidence="1">
    <location>
        <position position="275"/>
    </location>
    <ligand>
        <name>L-methionine</name>
        <dbReference type="ChEBI" id="CHEBI:57844"/>
        <note>ligand shared between two neighboring subunits</note>
    </ligand>
</feature>
<keyword id="KW-0067">ATP-binding</keyword>
<keyword id="KW-0963">Cytoplasm</keyword>
<keyword id="KW-0460">Magnesium</keyword>
<keyword id="KW-0479">Metal-binding</keyword>
<keyword id="KW-0547">Nucleotide-binding</keyword>
<keyword id="KW-0554">One-carbon metabolism</keyword>
<keyword id="KW-0630">Potassium</keyword>
<keyword id="KW-0808">Transferase</keyword>
<comment type="function">
    <text evidence="1">Catalyzes the formation of S-adenosylmethionine (AdoMet) from methionine and ATP. The overall synthetic reaction is composed of two sequential steps, AdoMet formation and the subsequent tripolyphosphate hydrolysis which occurs prior to release of AdoMet from the enzyme.</text>
</comment>
<comment type="catalytic activity">
    <reaction evidence="1">
        <text>L-methionine + ATP + H2O = S-adenosyl-L-methionine + phosphate + diphosphate</text>
        <dbReference type="Rhea" id="RHEA:21080"/>
        <dbReference type="ChEBI" id="CHEBI:15377"/>
        <dbReference type="ChEBI" id="CHEBI:30616"/>
        <dbReference type="ChEBI" id="CHEBI:33019"/>
        <dbReference type="ChEBI" id="CHEBI:43474"/>
        <dbReference type="ChEBI" id="CHEBI:57844"/>
        <dbReference type="ChEBI" id="CHEBI:59789"/>
        <dbReference type="EC" id="2.5.1.6"/>
    </reaction>
</comment>
<comment type="cofactor">
    <cofactor evidence="1">
        <name>Mg(2+)</name>
        <dbReference type="ChEBI" id="CHEBI:18420"/>
    </cofactor>
    <text evidence="1">Binds 2 divalent ions per subunit.</text>
</comment>
<comment type="cofactor">
    <cofactor evidence="1">
        <name>K(+)</name>
        <dbReference type="ChEBI" id="CHEBI:29103"/>
    </cofactor>
    <text evidence="1">Binds 1 potassium ion per subunit.</text>
</comment>
<comment type="pathway">
    <text evidence="1">Amino-acid biosynthesis; S-adenosyl-L-methionine biosynthesis; S-adenosyl-L-methionine from L-methionine: step 1/1.</text>
</comment>
<comment type="subunit">
    <text evidence="1">Homotetramer; dimer of dimers.</text>
</comment>
<comment type="subcellular location">
    <subcellularLocation>
        <location evidence="1">Cytoplasm</location>
    </subcellularLocation>
</comment>
<comment type="similarity">
    <text evidence="1">Belongs to the AdoMet synthase family.</text>
</comment>